<comment type="function">
    <text evidence="1">Excises uracil residues from the DNA which can arise as a result of misincorporation of dUMP residues by DNA polymerase or due to deamination of cytosine.</text>
</comment>
<comment type="catalytic activity">
    <reaction evidence="1">
        <text>Hydrolyzes single-stranded DNA or mismatched double-stranded DNA and polynucleotides, releasing free uracil.</text>
        <dbReference type="EC" id="3.2.2.27"/>
    </reaction>
</comment>
<comment type="subcellular location">
    <subcellularLocation>
        <location evidence="1">Cytoplasm</location>
    </subcellularLocation>
</comment>
<comment type="similarity">
    <text evidence="1">Belongs to the uracil-DNA glycosylase (UDG) superfamily. UNG family.</text>
</comment>
<gene>
    <name evidence="1" type="primary">ung</name>
    <name type="ordered locus">Rfer_3600</name>
</gene>
<organism>
    <name type="scientific">Albidiferax ferrireducens (strain ATCC BAA-621 / DSM 15236 / T118)</name>
    <name type="common">Rhodoferax ferrireducens</name>
    <dbReference type="NCBI Taxonomy" id="338969"/>
    <lineage>
        <taxon>Bacteria</taxon>
        <taxon>Pseudomonadati</taxon>
        <taxon>Pseudomonadota</taxon>
        <taxon>Betaproteobacteria</taxon>
        <taxon>Burkholderiales</taxon>
        <taxon>Comamonadaceae</taxon>
        <taxon>Rhodoferax</taxon>
    </lineage>
</organism>
<protein>
    <recommendedName>
        <fullName evidence="1">Uracil-DNA glycosylase</fullName>
        <shortName evidence="1">UDG</shortName>
        <ecNumber evidence="1">3.2.2.27</ecNumber>
    </recommendedName>
</protein>
<reference key="1">
    <citation type="submission" date="2006-02" db="EMBL/GenBank/DDBJ databases">
        <title>Complete sequence of chromosome of Rhodoferax ferrireducens DSM 15236.</title>
        <authorList>
            <person name="Copeland A."/>
            <person name="Lucas S."/>
            <person name="Lapidus A."/>
            <person name="Barry K."/>
            <person name="Detter J.C."/>
            <person name="Glavina del Rio T."/>
            <person name="Hammon N."/>
            <person name="Israni S."/>
            <person name="Pitluck S."/>
            <person name="Brettin T."/>
            <person name="Bruce D."/>
            <person name="Han C."/>
            <person name="Tapia R."/>
            <person name="Gilna P."/>
            <person name="Kiss H."/>
            <person name="Schmutz J."/>
            <person name="Larimer F."/>
            <person name="Land M."/>
            <person name="Kyrpides N."/>
            <person name="Ivanova N."/>
            <person name="Richardson P."/>
        </authorList>
    </citation>
    <scope>NUCLEOTIDE SEQUENCE [LARGE SCALE GENOMIC DNA]</scope>
    <source>
        <strain>ATCC BAA-621 / DSM 15236 / T118</strain>
    </source>
</reference>
<evidence type="ECO:0000255" key="1">
    <source>
        <dbReference type="HAMAP-Rule" id="MF_00148"/>
    </source>
</evidence>
<sequence>MFASDVPRLTGWAPERWPVAADWRPVVDRFLTSETGRALERFVRARLAGGAVIYPQQPLRALALTPLAQVKVVILGQDPYHGPGQAEGLAFSVAPGVRPPPSLCNIFREIARDPLLSPGNLIPHGDGSLVAWARQGVLLLNSCLTVEEGQPASHAGRGWEALTDEVVKAVASIDNPVVFLLWGAHAQAKQRLIAATARQGGRAAADHLVLTANHPSPLSARRPPLPFLGCGHFGLANAYLLQHGCAPIAW</sequence>
<accession>Q21SE9</accession>
<proteinExistence type="inferred from homology"/>
<name>UNG_ALBFT</name>
<feature type="chain" id="PRO_1000009934" description="Uracil-DNA glycosylase">
    <location>
        <begin position="1"/>
        <end position="250"/>
    </location>
</feature>
<feature type="active site" description="Proton acceptor" evidence="1">
    <location>
        <position position="78"/>
    </location>
</feature>
<keyword id="KW-0963">Cytoplasm</keyword>
<keyword id="KW-0227">DNA damage</keyword>
<keyword id="KW-0234">DNA repair</keyword>
<keyword id="KW-0378">Hydrolase</keyword>
<keyword id="KW-1185">Reference proteome</keyword>
<dbReference type="EC" id="3.2.2.27" evidence="1"/>
<dbReference type="EMBL" id="CP000267">
    <property type="protein sequence ID" value="ABD71304.1"/>
    <property type="molecule type" value="Genomic_DNA"/>
</dbReference>
<dbReference type="RefSeq" id="WP_011465867.1">
    <property type="nucleotide sequence ID" value="NC_007908.1"/>
</dbReference>
<dbReference type="SMR" id="Q21SE9"/>
<dbReference type="STRING" id="338969.Rfer_3600"/>
<dbReference type="KEGG" id="rfr:Rfer_3600"/>
<dbReference type="eggNOG" id="COG0692">
    <property type="taxonomic scope" value="Bacteria"/>
</dbReference>
<dbReference type="HOGENOM" id="CLU_032162_3_0_4"/>
<dbReference type="OrthoDB" id="9804372at2"/>
<dbReference type="Proteomes" id="UP000008332">
    <property type="component" value="Chromosome"/>
</dbReference>
<dbReference type="GO" id="GO:0005737">
    <property type="term" value="C:cytoplasm"/>
    <property type="evidence" value="ECO:0007669"/>
    <property type="project" value="UniProtKB-SubCell"/>
</dbReference>
<dbReference type="GO" id="GO:0004844">
    <property type="term" value="F:uracil DNA N-glycosylase activity"/>
    <property type="evidence" value="ECO:0007669"/>
    <property type="project" value="UniProtKB-UniRule"/>
</dbReference>
<dbReference type="GO" id="GO:0097510">
    <property type="term" value="P:base-excision repair, AP site formation via deaminated base removal"/>
    <property type="evidence" value="ECO:0007669"/>
    <property type="project" value="TreeGrafter"/>
</dbReference>
<dbReference type="CDD" id="cd10027">
    <property type="entry name" value="UDG-F1-like"/>
    <property type="match status" value="1"/>
</dbReference>
<dbReference type="Gene3D" id="3.40.470.10">
    <property type="entry name" value="Uracil-DNA glycosylase-like domain"/>
    <property type="match status" value="1"/>
</dbReference>
<dbReference type="HAMAP" id="MF_00148">
    <property type="entry name" value="UDG"/>
    <property type="match status" value="1"/>
</dbReference>
<dbReference type="InterPro" id="IPR002043">
    <property type="entry name" value="UDG_fam1"/>
</dbReference>
<dbReference type="InterPro" id="IPR018085">
    <property type="entry name" value="Ura-DNA_Glyclase_AS"/>
</dbReference>
<dbReference type="InterPro" id="IPR005122">
    <property type="entry name" value="Uracil-DNA_glycosylase-like"/>
</dbReference>
<dbReference type="InterPro" id="IPR036895">
    <property type="entry name" value="Uracil-DNA_glycosylase-like_sf"/>
</dbReference>
<dbReference type="NCBIfam" id="NF003588">
    <property type="entry name" value="PRK05254.1-1"/>
    <property type="match status" value="1"/>
</dbReference>
<dbReference type="NCBIfam" id="NF003589">
    <property type="entry name" value="PRK05254.1-2"/>
    <property type="match status" value="1"/>
</dbReference>
<dbReference type="NCBIfam" id="NF003591">
    <property type="entry name" value="PRK05254.1-4"/>
    <property type="match status" value="1"/>
</dbReference>
<dbReference type="NCBIfam" id="NF003592">
    <property type="entry name" value="PRK05254.1-5"/>
    <property type="match status" value="1"/>
</dbReference>
<dbReference type="NCBIfam" id="TIGR00628">
    <property type="entry name" value="ung"/>
    <property type="match status" value="1"/>
</dbReference>
<dbReference type="PANTHER" id="PTHR11264">
    <property type="entry name" value="URACIL-DNA GLYCOSYLASE"/>
    <property type="match status" value="1"/>
</dbReference>
<dbReference type="PANTHER" id="PTHR11264:SF0">
    <property type="entry name" value="URACIL-DNA GLYCOSYLASE"/>
    <property type="match status" value="1"/>
</dbReference>
<dbReference type="Pfam" id="PF03167">
    <property type="entry name" value="UDG"/>
    <property type="match status" value="1"/>
</dbReference>
<dbReference type="SMART" id="SM00986">
    <property type="entry name" value="UDG"/>
    <property type="match status" value="1"/>
</dbReference>
<dbReference type="SMART" id="SM00987">
    <property type="entry name" value="UreE_C"/>
    <property type="match status" value="1"/>
</dbReference>
<dbReference type="SUPFAM" id="SSF52141">
    <property type="entry name" value="Uracil-DNA glycosylase-like"/>
    <property type="match status" value="1"/>
</dbReference>
<dbReference type="PROSITE" id="PS00130">
    <property type="entry name" value="U_DNA_GLYCOSYLASE"/>
    <property type="match status" value="1"/>
</dbReference>